<dbReference type="EC" id="3.6.4.-" evidence="1"/>
<dbReference type="EMBL" id="AP006627">
    <property type="protein sequence ID" value="BAD64090.1"/>
    <property type="molecule type" value="Genomic_DNA"/>
</dbReference>
<dbReference type="RefSeq" id="WP_011246399.1">
    <property type="nucleotide sequence ID" value="NC_006582.1"/>
</dbReference>
<dbReference type="SMR" id="Q5WHR5"/>
<dbReference type="STRING" id="66692.ABC1555"/>
<dbReference type="KEGG" id="bcl:ABC1555"/>
<dbReference type="eggNOG" id="COG2255">
    <property type="taxonomic scope" value="Bacteria"/>
</dbReference>
<dbReference type="HOGENOM" id="CLU_055599_1_0_9"/>
<dbReference type="OrthoDB" id="9804478at2"/>
<dbReference type="Proteomes" id="UP000001168">
    <property type="component" value="Chromosome"/>
</dbReference>
<dbReference type="GO" id="GO:0005737">
    <property type="term" value="C:cytoplasm"/>
    <property type="evidence" value="ECO:0007669"/>
    <property type="project" value="UniProtKB-SubCell"/>
</dbReference>
<dbReference type="GO" id="GO:0048476">
    <property type="term" value="C:Holliday junction resolvase complex"/>
    <property type="evidence" value="ECO:0007669"/>
    <property type="project" value="UniProtKB-UniRule"/>
</dbReference>
<dbReference type="GO" id="GO:0005524">
    <property type="term" value="F:ATP binding"/>
    <property type="evidence" value="ECO:0007669"/>
    <property type="project" value="UniProtKB-UniRule"/>
</dbReference>
<dbReference type="GO" id="GO:0016887">
    <property type="term" value="F:ATP hydrolysis activity"/>
    <property type="evidence" value="ECO:0007669"/>
    <property type="project" value="InterPro"/>
</dbReference>
<dbReference type="GO" id="GO:0000400">
    <property type="term" value="F:four-way junction DNA binding"/>
    <property type="evidence" value="ECO:0007669"/>
    <property type="project" value="UniProtKB-UniRule"/>
</dbReference>
<dbReference type="GO" id="GO:0009378">
    <property type="term" value="F:four-way junction helicase activity"/>
    <property type="evidence" value="ECO:0007669"/>
    <property type="project" value="InterPro"/>
</dbReference>
<dbReference type="GO" id="GO:0006310">
    <property type="term" value="P:DNA recombination"/>
    <property type="evidence" value="ECO:0007669"/>
    <property type="project" value="UniProtKB-UniRule"/>
</dbReference>
<dbReference type="GO" id="GO:0006281">
    <property type="term" value="P:DNA repair"/>
    <property type="evidence" value="ECO:0007669"/>
    <property type="project" value="UniProtKB-UniRule"/>
</dbReference>
<dbReference type="CDD" id="cd00009">
    <property type="entry name" value="AAA"/>
    <property type="match status" value="1"/>
</dbReference>
<dbReference type="Gene3D" id="1.10.8.60">
    <property type="match status" value="1"/>
</dbReference>
<dbReference type="Gene3D" id="3.40.50.300">
    <property type="entry name" value="P-loop containing nucleotide triphosphate hydrolases"/>
    <property type="match status" value="1"/>
</dbReference>
<dbReference type="Gene3D" id="1.10.10.10">
    <property type="entry name" value="Winged helix-like DNA-binding domain superfamily/Winged helix DNA-binding domain"/>
    <property type="match status" value="1"/>
</dbReference>
<dbReference type="HAMAP" id="MF_00016">
    <property type="entry name" value="DNA_HJ_migration_RuvB"/>
    <property type="match status" value="1"/>
</dbReference>
<dbReference type="InterPro" id="IPR003593">
    <property type="entry name" value="AAA+_ATPase"/>
</dbReference>
<dbReference type="InterPro" id="IPR041445">
    <property type="entry name" value="AAA_lid_4"/>
</dbReference>
<dbReference type="InterPro" id="IPR004605">
    <property type="entry name" value="DNA_helicase_Holl-junc_RuvB"/>
</dbReference>
<dbReference type="InterPro" id="IPR027417">
    <property type="entry name" value="P-loop_NTPase"/>
</dbReference>
<dbReference type="InterPro" id="IPR008824">
    <property type="entry name" value="RuvB-like_N"/>
</dbReference>
<dbReference type="InterPro" id="IPR008823">
    <property type="entry name" value="RuvB_C"/>
</dbReference>
<dbReference type="InterPro" id="IPR036388">
    <property type="entry name" value="WH-like_DNA-bd_sf"/>
</dbReference>
<dbReference type="InterPro" id="IPR036390">
    <property type="entry name" value="WH_DNA-bd_sf"/>
</dbReference>
<dbReference type="NCBIfam" id="NF000868">
    <property type="entry name" value="PRK00080.1"/>
    <property type="match status" value="1"/>
</dbReference>
<dbReference type="NCBIfam" id="TIGR00635">
    <property type="entry name" value="ruvB"/>
    <property type="match status" value="1"/>
</dbReference>
<dbReference type="PANTHER" id="PTHR42848">
    <property type="match status" value="1"/>
</dbReference>
<dbReference type="PANTHER" id="PTHR42848:SF1">
    <property type="entry name" value="HOLLIDAY JUNCTION BRANCH MIGRATION COMPLEX SUBUNIT RUVB"/>
    <property type="match status" value="1"/>
</dbReference>
<dbReference type="Pfam" id="PF17864">
    <property type="entry name" value="AAA_lid_4"/>
    <property type="match status" value="1"/>
</dbReference>
<dbReference type="Pfam" id="PF05491">
    <property type="entry name" value="RuvB_C"/>
    <property type="match status" value="1"/>
</dbReference>
<dbReference type="Pfam" id="PF05496">
    <property type="entry name" value="RuvB_N"/>
    <property type="match status" value="1"/>
</dbReference>
<dbReference type="SMART" id="SM00382">
    <property type="entry name" value="AAA"/>
    <property type="match status" value="1"/>
</dbReference>
<dbReference type="SUPFAM" id="SSF52540">
    <property type="entry name" value="P-loop containing nucleoside triphosphate hydrolases"/>
    <property type="match status" value="1"/>
</dbReference>
<dbReference type="SUPFAM" id="SSF46785">
    <property type="entry name" value="Winged helix' DNA-binding domain"/>
    <property type="match status" value="1"/>
</dbReference>
<keyword id="KW-0067">ATP-binding</keyword>
<keyword id="KW-0963">Cytoplasm</keyword>
<keyword id="KW-0227">DNA damage</keyword>
<keyword id="KW-0233">DNA recombination</keyword>
<keyword id="KW-0234">DNA repair</keyword>
<keyword id="KW-0238">DNA-binding</keyword>
<keyword id="KW-0378">Hydrolase</keyword>
<keyword id="KW-0547">Nucleotide-binding</keyword>
<keyword id="KW-1185">Reference proteome</keyword>
<accession>Q5WHR5</accession>
<gene>
    <name evidence="1" type="primary">ruvB</name>
    <name type="ordered locus">ABC1555</name>
</gene>
<feature type="chain" id="PRO_0000165492" description="Holliday junction branch migration complex subunit RuvB">
    <location>
        <begin position="1"/>
        <end position="333"/>
    </location>
</feature>
<feature type="region of interest" description="Large ATPase domain (RuvB-L)" evidence="1">
    <location>
        <begin position="1"/>
        <end position="182"/>
    </location>
</feature>
<feature type="region of interest" description="Small ATPAse domain (RuvB-S)" evidence="1">
    <location>
        <begin position="183"/>
        <end position="253"/>
    </location>
</feature>
<feature type="region of interest" description="Head domain (RuvB-H)" evidence="1">
    <location>
        <begin position="256"/>
        <end position="333"/>
    </location>
</feature>
<feature type="binding site" evidence="1">
    <location>
        <position position="21"/>
    </location>
    <ligand>
        <name>ATP</name>
        <dbReference type="ChEBI" id="CHEBI:30616"/>
    </ligand>
</feature>
<feature type="binding site" evidence="1">
    <location>
        <position position="22"/>
    </location>
    <ligand>
        <name>ATP</name>
        <dbReference type="ChEBI" id="CHEBI:30616"/>
    </ligand>
</feature>
<feature type="binding site" evidence="1">
    <location>
        <position position="63"/>
    </location>
    <ligand>
        <name>ATP</name>
        <dbReference type="ChEBI" id="CHEBI:30616"/>
    </ligand>
</feature>
<feature type="binding site" evidence="1">
    <location>
        <position position="66"/>
    </location>
    <ligand>
        <name>ATP</name>
        <dbReference type="ChEBI" id="CHEBI:30616"/>
    </ligand>
</feature>
<feature type="binding site" evidence="1">
    <location>
        <position position="67"/>
    </location>
    <ligand>
        <name>ATP</name>
        <dbReference type="ChEBI" id="CHEBI:30616"/>
    </ligand>
</feature>
<feature type="binding site" evidence="1">
    <location>
        <position position="67"/>
    </location>
    <ligand>
        <name>Mg(2+)</name>
        <dbReference type="ChEBI" id="CHEBI:18420"/>
    </ligand>
</feature>
<feature type="binding site" evidence="1">
    <location>
        <position position="68"/>
    </location>
    <ligand>
        <name>ATP</name>
        <dbReference type="ChEBI" id="CHEBI:30616"/>
    </ligand>
</feature>
<feature type="binding site" evidence="1">
    <location>
        <begin position="129"/>
        <end position="131"/>
    </location>
    <ligand>
        <name>ATP</name>
        <dbReference type="ChEBI" id="CHEBI:30616"/>
    </ligand>
</feature>
<feature type="binding site" evidence="1">
    <location>
        <position position="172"/>
    </location>
    <ligand>
        <name>ATP</name>
        <dbReference type="ChEBI" id="CHEBI:30616"/>
    </ligand>
</feature>
<feature type="binding site" evidence="1">
    <location>
        <position position="182"/>
    </location>
    <ligand>
        <name>ATP</name>
        <dbReference type="ChEBI" id="CHEBI:30616"/>
    </ligand>
</feature>
<feature type="binding site" evidence="1">
    <location>
        <position position="219"/>
    </location>
    <ligand>
        <name>ATP</name>
        <dbReference type="ChEBI" id="CHEBI:30616"/>
    </ligand>
</feature>
<feature type="binding site" evidence="1">
    <location>
        <position position="311"/>
    </location>
    <ligand>
        <name>DNA</name>
        <dbReference type="ChEBI" id="CHEBI:16991"/>
    </ligand>
</feature>
<feature type="binding site" evidence="1">
    <location>
        <position position="316"/>
    </location>
    <ligand>
        <name>DNA</name>
        <dbReference type="ChEBI" id="CHEBI:16991"/>
    </ligand>
</feature>
<name>RUVB_SHOC1</name>
<organism>
    <name type="scientific">Shouchella clausii (strain KSM-K16)</name>
    <name type="common">Alkalihalobacillus clausii</name>
    <dbReference type="NCBI Taxonomy" id="66692"/>
    <lineage>
        <taxon>Bacteria</taxon>
        <taxon>Bacillati</taxon>
        <taxon>Bacillota</taxon>
        <taxon>Bacilli</taxon>
        <taxon>Bacillales</taxon>
        <taxon>Bacillaceae</taxon>
        <taxon>Shouchella</taxon>
    </lineage>
</organism>
<comment type="function">
    <text evidence="1">The RuvA-RuvB-RuvC complex processes Holliday junction (HJ) DNA during genetic recombination and DNA repair, while the RuvA-RuvB complex plays an important role in the rescue of blocked DNA replication forks via replication fork reversal (RFR). RuvA specifically binds to HJ cruciform DNA, conferring on it an open structure. The RuvB hexamer acts as an ATP-dependent pump, pulling dsDNA into and through the RuvAB complex. RuvB forms 2 homohexamers on either side of HJ DNA bound by 1 or 2 RuvA tetramers; 4 subunits per hexamer contact DNA at a time. Coordinated motions by a converter formed by DNA-disengaged RuvB subunits stimulates ATP hydrolysis and nucleotide exchange. Immobilization of the converter enables RuvB to convert the ATP-contained energy into a lever motion, pulling 2 nucleotides of DNA out of the RuvA tetramer per ATP hydrolyzed, thus driving DNA branch migration. The RuvB motors rotate together with the DNA substrate, which together with the progressing nucleotide cycle form the mechanistic basis for DNA recombination by continuous HJ branch migration. Branch migration allows RuvC to scan DNA until it finds its consensus sequence, where it cleaves and resolves cruciform DNA.</text>
</comment>
<comment type="catalytic activity">
    <reaction evidence="1">
        <text>ATP + H2O = ADP + phosphate + H(+)</text>
        <dbReference type="Rhea" id="RHEA:13065"/>
        <dbReference type="ChEBI" id="CHEBI:15377"/>
        <dbReference type="ChEBI" id="CHEBI:15378"/>
        <dbReference type="ChEBI" id="CHEBI:30616"/>
        <dbReference type="ChEBI" id="CHEBI:43474"/>
        <dbReference type="ChEBI" id="CHEBI:456216"/>
    </reaction>
</comment>
<comment type="subunit">
    <text evidence="1">Homohexamer. Forms an RuvA(8)-RuvB(12)-Holliday junction (HJ) complex. HJ DNA is sandwiched between 2 RuvA tetramers; dsDNA enters through RuvA and exits via RuvB. An RuvB hexamer assembles on each DNA strand where it exits the tetramer. Each RuvB hexamer is contacted by two RuvA subunits (via domain III) on 2 adjacent RuvB subunits; this complex drives branch migration. In the full resolvosome a probable DNA-RuvA(4)-RuvB(12)-RuvC(2) complex forms which resolves the HJ.</text>
</comment>
<comment type="subcellular location">
    <subcellularLocation>
        <location evidence="1">Cytoplasm</location>
    </subcellularLocation>
</comment>
<comment type="domain">
    <text evidence="1">Has 3 domains, the large (RuvB-L) and small ATPase (RuvB-S) domains and the C-terminal head (RuvB-H) domain. The head domain binds DNA, while the ATPase domains jointly bind ATP, ADP or are empty depending on the state of the subunit in the translocation cycle. During a single DNA translocation step the structure of each domain remains the same, but their relative positions change.</text>
</comment>
<comment type="similarity">
    <text evidence="1">Belongs to the RuvB family.</text>
</comment>
<proteinExistence type="inferred from homology"/>
<protein>
    <recommendedName>
        <fullName evidence="1">Holliday junction branch migration complex subunit RuvB</fullName>
        <ecNumber evidence="1">3.6.4.-</ecNumber>
    </recommendedName>
</protein>
<evidence type="ECO:0000255" key="1">
    <source>
        <dbReference type="HAMAP-Rule" id="MF_00016"/>
    </source>
</evidence>
<reference key="1">
    <citation type="submission" date="2003-10" db="EMBL/GenBank/DDBJ databases">
        <title>The complete genome sequence of the alkaliphilic Bacillus clausii KSM-K16.</title>
        <authorList>
            <person name="Takaki Y."/>
            <person name="Kageyama Y."/>
            <person name="Shimamura S."/>
            <person name="Suzuki H."/>
            <person name="Nishi S."/>
            <person name="Hatada Y."/>
            <person name="Kawai S."/>
            <person name="Ito S."/>
            <person name="Horikoshi K."/>
        </authorList>
    </citation>
    <scope>NUCLEOTIDE SEQUENCE [LARGE SCALE GENOMIC DNA]</scope>
    <source>
        <strain>KSM-K16</strain>
    </source>
</reference>
<sequence>MEERIVSAEATELEEQSEQGLRPKRLADYIGQETVKHNLAVFMEAAKMREEALDHVLLYGPPGLGKTTLAAIIAAEMGGELRTTSGPAIERSGDLAAILTALEPGDVLFIDEIHRLNRTVEEVLYPAMEDFCLDIVIGKGPTARSVRLDLPPFTLVGATTRAGMLSSPLRDRFGVMARLEYYKPEELAQIVERSATVFQATLEPSAALELARRSRGTPRIANRLLRRVRDFAQVGGEAAISLERACSALEQLHVDPLGLDHIDDKLLKGMIEKFNGGPVGLETIAATIGEEAATIEEVYEPYLLQIGFIQRTPRGRIATPACYAHYGVEKQNG</sequence>